<protein>
    <recommendedName>
        <fullName>GDNF family receptor alpha-2</fullName>
        <shortName>GDNF receptor alpha-2</shortName>
        <shortName>GDNFR-alpha-2</shortName>
        <shortName>GFR-alpha-2</shortName>
    </recommendedName>
    <alternativeName>
        <fullName>GDNF receptor beta</fullName>
        <shortName>GDNFR-beta</shortName>
    </alternativeName>
    <alternativeName>
        <fullName>Neurturin receptor alpha</fullName>
        <shortName>NRTNR-alpha</shortName>
        <shortName>NTNR-alpha</shortName>
    </alternativeName>
    <alternativeName>
        <fullName>TGF-beta-related neurotrophic factor receptor 2</fullName>
    </alternativeName>
</protein>
<proteinExistence type="evidence at protein level"/>
<gene>
    <name evidence="14 16" type="primary">Gfra2</name>
    <name type="synonym">Gdnfrb</name>
    <name evidence="9" type="synonym">Trnr2</name>
</gene>
<organism>
    <name type="scientific">Mus musculus</name>
    <name type="common">Mouse</name>
    <dbReference type="NCBI Taxonomy" id="10090"/>
    <lineage>
        <taxon>Eukaryota</taxon>
        <taxon>Metazoa</taxon>
        <taxon>Chordata</taxon>
        <taxon>Craniata</taxon>
        <taxon>Vertebrata</taxon>
        <taxon>Euteleostomi</taxon>
        <taxon>Mammalia</taxon>
        <taxon>Eutheria</taxon>
        <taxon>Euarchontoglires</taxon>
        <taxon>Glires</taxon>
        <taxon>Rodentia</taxon>
        <taxon>Myomorpha</taxon>
        <taxon>Muroidea</taxon>
        <taxon>Muridae</taxon>
        <taxon>Murinae</taxon>
        <taxon>Mus</taxon>
        <taxon>Mus</taxon>
    </lineage>
</organism>
<name>GFRA2_MOUSE</name>
<keyword id="KW-0025">Alternative splicing</keyword>
<keyword id="KW-1003">Cell membrane</keyword>
<keyword id="KW-1015">Disulfide bond</keyword>
<keyword id="KW-0325">Glycoprotein</keyword>
<keyword id="KW-0336">GPI-anchor</keyword>
<keyword id="KW-0449">Lipoprotein</keyword>
<keyword id="KW-0472">Membrane</keyword>
<keyword id="KW-0675">Receptor</keyword>
<keyword id="KW-1185">Reference proteome</keyword>
<keyword id="KW-0732">Signal</keyword>
<feature type="signal peptide" evidence="2">
    <location>
        <begin position="1"/>
        <end position="21"/>
    </location>
</feature>
<feature type="chain" id="PRO_0000010787" description="GDNF family receptor alpha-2">
    <location>
        <begin position="22"/>
        <end position="443"/>
    </location>
</feature>
<feature type="propeptide" id="PRO_0000010788" description="Removed in mature form" evidence="2">
    <location>
        <begin position="444"/>
        <end position="464"/>
    </location>
</feature>
<feature type="region of interest" description="Disordered" evidence="3">
    <location>
        <begin position="363"/>
        <end position="392"/>
    </location>
</feature>
<feature type="compositionally biased region" description="Low complexity" evidence="3">
    <location>
        <begin position="381"/>
        <end position="392"/>
    </location>
</feature>
<feature type="lipid moiety-binding region" description="GPI-anchor amidated serine" evidence="2">
    <location>
        <position position="443"/>
    </location>
</feature>
<feature type="glycosylation site" description="N-linked (GlcNAc...) asparagine" evidence="2">
    <location>
        <position position="52"/>
    </location>
</feature>
<feature type="glycosylation site" description="N-linked (GlcNAc...) asparagine" evidence="2">
    <location>
        <position position="357"/>
    </location>
</feature>
<feature type="glycosylation site" description="N-linked (GlcNAc...) asparagine" evidence="2">
    <location>
        <position position="413"/>
    </location>
</feature>
<feature type="disulfide bond" evidence="1">
    <location>
        <begin position="40"/>
        <end position="93"/>
    </location>
</feature>
<feature type="disulfide bond" evidence="1">
    <location>
        <begin position="47"/>
        <end position="53"/>
    </location>
</feature>
<feature type="disulfide bond" evidence="1">
    <location>
        <begin position="63"/>
        <end position="78"/>
    </location>
</feature>
<feature type="disulfide bond" evidence="1">
    <location>
        <begin position="95"/>
        <end position="105"/>
    </location>
</feature>
<feature type="disulfide bond" evidence="1">
    <location>
        <begin position="161"/>
        <end position="222"/>
    </location>
</feature>
<feature type="disulfide bond" evidence="1">
    <location>
        <begin position="168"/>
        <end position="174"/>
    </location>
</feature>
<feature type="disulfide bond" evidence="1">
    <location>
        <begin position="185"/>
        <end position="200"/>
    </location>
</feature>
<feature type="disulfide bond" evidence="1">
    <location>
        <begin position="195"/>
        <end position="241"/>
    </location>
</feature>
<feature type="disulfide bond" evidence="1">
    <location>
        <begin position="224"/>
        <end position="229"/>
    </location>
</feature>
<feature type="disulfide bond" evidence="1">
    <location>
        <begin position="251"/>
        <end position="323"/>
    </location>
</feature>
<feature type="disulfide bond" evidence="1">
    <location>
        <begin position="258"/>
        <end position="264"/>
    </location>
</feature>
<feature type="disulfide bond" evidence="1">
    <location>
        <begin position="275"/>
        <end position="293"/>
    </location>
</feature>
<feature type="disulfide bond" evidence="1">
    <location>
        <begin position="285"/>
        <end position="347"/>
    </location>
</feature>
<feature type="disulfide bond" evidence="1">
    <location>
        <begin position="325"/>
        <end position="335"/>
    </location>
</feature>
<feature type="splice variant" id="VSP_001662" description="In isoform 2." evidence="8 9">
    <location>
        <begin position="14"/>
        <end position="146"/>
    </location>
</feature>
<feature type="splice variant" id="VSP_057520" description="In isoform 3." evidence="8">
    <location>
        <begin position="14"/>
        <end position="118"/>
    </location>
</feature>
<feature type="sequence conflict" description="In Ref. 2; AAC82464/AAC82465." evidence="11" ref="2">
    <original>K</original>
    <variation>E</variation>
    <location>
        <position position="157"/>
    </location>
</feature>
<feature type="sequence conflict" description="In Ref. 3; AAK97483." evidence="11" ref="3">
    <original>D</original>
    <variation>E</variation>
    <location>
        <position position="387"/>
    </location>
</feature>
<feature type="sequence conflict" description="In Ref. 3; AAK97483." evidence="11" ref="3">
    <original>L</original>
    <variation>I</variation>
    <location>
        <position position="388"/>
    </location>
</feature>
<feature type="sequence conflict" description="In Ref. 3; AAK97483." evidence="11" ref="3">
    <original>S</original>
    <variation>G</variation>
    <location>
        <position position="391"/>
    </location>
</feature>
<sequence>MILANAFCLFFFLDETLRSLASPSSPQGSELHGWRPQVDCVRANELCAAESNCSSRYRTLRQCLAGRDRNTMLANKECQAALEVLQESPLYDCRCKRGMKKELQCLQIYWSIHLGLTEGEEFYEASPYEPVTSRLSDIFRLASIFSGTGADPVVSAKSNHCLDAAKACNLNDNCKKLRSSYISICNREISPTERCNRRKCHKALRQFFDRVPSEYTYRMLFCSCQDQACAERRRQTILPSCSYEDKEKPNCLDLRSLCRTDHLCRSRLADFHANCRASYRTITSCPADNYQACLGSYAGMIGFDMTPNYVDSNPTGIVVSPWCNCRGSGNMEEECEKFLKDFTENPCLRNAIQAFGNGTDVNMSPKGPTFSATQAPRVEKTPSLPDDLSDSTSLGTSVITTCTSIQEQGLKANNSKELSMCFTELTTNISPGSKKVIKLYSGSCRARLSTALTALPLLMVTLAQ</sequence>
<dbReference type="EMBL" id="AF002701">
    <property type="protein sequence ID" value="AAC53548.1"/>
    <property type="status" value="ALT_SEQ"/>
    <property type="molecule type" value="mRNA"/>
</dbReference>
<dbReference type="EMBL" id="AF079107">
    <property type="protein sequence ID" value="AAC82464.1"/>
    <property type="status" value="ALT_SEQ"/>
    <property type="molecule type" value="mRNA"/>
</dbReference>
<dbReference type="EMBL" id="AF079108">
    <property type="protein sequence ID" value="AAC82465.1"/>
    <property type="status" value="ALT_SEQ"/>
    <property type="molecule type" value="mRNA"/>
</dbReference>
<dbReference type="EMBL" id="AF398416">
    <property type="protein sequence ID" value="AAK97483.1"/>
    <property type="status" value="ALT_SEQ"/>
    <property type="molecule type" value="Genomic_DNA"/>
</dbReference>
<dbReference type="EMBL" id="AF398411">
    <property type="protein sequence ID" value="AAK97483.1"/>
    <property type="status" value="JOINED"/>
    <property type="molecule type" value="Genomic_DNA"/>
</dbReference>
<dbReference type="EMBL" id="AF398412">
    <property type="protein sequence ID" value="AAK97483.1"/>
    <property type="status" value="JOINED"/>
    <property type="molecule type" value="Genomic_DNA"/>
</dbReference>
<dbReference type="EMBL" id="AF398413">
    <property type="protein sequence ID" value="AAK97483.1"/>
    <property type="status" value="JOINED"/>
    <property type="molecule type" value="Genomic_DNA"/>
</dbReference>
<dbReference type="EMBL" id="AF398414">
    <property type="protein sequence ID" value="AAK97483.1"/>
    <property type="status" value="JOINED"/>
    <property type="molecule type" value="Genomic_DNA"/>
</dbReference>
<dbReference type="EMBL" id="AF398415">
    <property type="protein sequence ID" value="AAK97483.1"/>
    <property type="status" value="JOINED"/>
    <property type="molecule type" value="Genomic_DNA"/>
</dbReference>
<dbReference type="EMBL" id="AK138512">
    <property type="protein sequence ID" value="BAE23689.1"/>
    <property type="molecule type" value="mRNA"/>
</dbReference>
<dbReference type="EMBL" id="AC124202">
    <property type="status" value="NOT_ANNOTATED_CDS"/>
    <property type="molecule type" value="Genomic_DNA"/>
</dbReference>
<dbReference type="EMBL" id="CH466535">
    <property type="protein sequence ID" value="EDL35876.1"/>
    <property type="molecule type" value="Genomic_DNA"/>
</dbReference>
<dbReference type="EMBL" id="BC138561">
    <property type="protein sequence ID" value="AAI38562.1"/>
    <property type="molecule type" value="mRNA"/>
</dbReference>
<dbReference type="CCDS" id="CCDS27263.1">
    <molecule id="O08842-1"/>
</dbReference>
<dbReference type="CCDS" id="CCDS88711.1">
    <molecule id="O08842-2"/>
</dbReference>
<dbReference type="RefSeq" id="NP_001289023.1">
    <molecule id="O08842-3"/>
    <property type="nucleotide sequence ID" value="NM_001302094.1"/>
</dbReference>
<dbReference type="RefSeq" id="NP_001289024.1">
    <molecule id="O08842-2"/>
    <property type="nucleotide sequence ID" value="NM_001302095.1"/>
</dbReference>
<dbReference type="RefSeq" id="NP_032141.2">
    <molecule id="O08842-1"/>
    <property type="nucleotide sequence ID" value="NM_008115.3"/>
</dbReference>
<dbReference type="SMR" id="O08842"/>
<dbReference type="BioGRID" id="199905">
    <property type="interactions" value="2"/>
</dbReference>
<dbReference type="FunCoup" id="O08842">
    <property type="interactions" value="50"/>
</dbReference>
<dbReference type="IntAct" id="O08842">
    <property type="interactions" value="1"/>
</dbReference>
<dbReference type="MINT" id="O08842"/>
<dbReference type="STRING" id="10090.ENSMUSP00000022699"/>
<dbReference type="GlyCosmos" id="O08842">
    <property type="glycosylation" value="3 sites, No reported glycans"/>
</dbReference>
<dbReference type="GlyGen" id="O08842">
    <property type="glycosylation" value="6 sites, 4 N-linked glycans (5 sites), 1 O-linked glycan (1 site)"/>
</dbReference>
<dbReference type="iPTMnet" id="O08842"/>
<dbReference type="PhosphoSitePlus" id="O08842"/>
<dbReference type="SwissPalm" id="O08842"/>
<dbReference type="PaxDb" id="10090-ENSMUSP00000022699"/>
<dbReference type="PeptideAtlas" id="O08842"/>
<dbReference type="ProteomicsDB" id="268868">
    <molecule id="O08842-1"/>
</dbReference>
<dbReference type="ProteomicsDB" id="268869">
    <molecule id="O08842-2"/>
</dbReference>
<dbReference type="ProteomicsDB" id="268870">
    <molecule id="O08842-3"/>
</dbReference>
<dbReference type="Pumba" id="O08842"/>
<dbReference type="Antibodypedia" id="5212">
    <property type="antibodies" value="400 antibodies from 34 providers"/>
</dbReference>
<dbReference type="DNASU" id="14586"/>
<dbReference type="Ensembl" id="ENSMUST00000022699.10">
    <molecule id="O08842-1"/>
    <property type="protein sequence ID" value="ENSMUSP00000022699.9"/>
    <property type="gene ID" value="ENSMUSG00000022103.11"/>
</dbReference>
<dbReference type="Ensembl" id="ENSMUST00000227697.2">
    <molecule id="O08842-2"/>
    <property type="protein sequence ID" value="ENSMUSP00000154391.2"/>
    <property type="gene ID" value="ENSMUSG00000022103.11"/>
</dbReference>
<dbReference type="GeneID" id="14586"/>
<dbReference type="KEGG" id="mmu:14586"/>
<dbReference type="UCSC" id="uc007uoz.2">
    <molecule id="O08842-1"/>
    <property type="organism name" value="mouse"/>
</dbReference>
<dbReference type="UCSC" id="uc007upb.2">
    <molecule id="O08842-2"/>
    <property type="organism name" value="mouse"/>
</dbReference>
<dbReference type="AGR" id="MGI:1195462"/>
<dbReference type="CTD" id="2675"/>
<dbReference type="MGI" id="MGI:1195462">
    <property type="gene designation" value="Gfra2"/>
</dbReference>
<dbReference type="VEuPathDB" id="HostDB:ENSMUSG00000022103"/>
<dbReference type="eggNOG" id="ENOG502QS3P">
    <property type="taxonomic scope" value="Eukaryota"/>
</dbReference>
<dbReference type="GeneTree" id="ENSGT00940000156168"/>
<dbReference type="HOGENOM" id="CLU_040179_1_1_1"/>
<dbReference type="InParanoid" id="O08842"/>
<dbReference type="OMA" id="LCYSEAQ"/>
<dbReference type="OrthoDB" id="9435188at2759"/>
<dbReference type="PhylomeDB" id="O08842"/>
<dbReference type="TreeFam" id="TF331647"/>
<dbReference type="Reactome" id="R-MMU-5673001">
    <property type="pathway name" value="RAF/MAP kinase cascade"/>
</dbReference>
<dbReference type="Reactome" id="R-MMU-8853659">
    <property type="pathway name" value="RET signaling"/>
</dbReference>
<dbReference type="BioGRID-ORCS" id="14586">
    <property type="hits" value="1 hit in 78 CRISPR screens"/>
</dbReference>
<dbReference type="CD-CODE" id="CE726F99">
    <property type="entry name" value="Postsynaptic density"/>
</dbReference>
<dbReference type="ChiTaRS" id="Gfra2">
    <property type="organism name" value="mouse"/>
</dbReference>
<dbReference type="PRO" id="PR:O08842"/>
<dbReference type="Proteomes" id="UP000000589">
    <property type="component" value="Chromosome 14"/>
</dbReference>
<dbReference type="RNAct" id="O08842">
    <property type="molecule type" value="protein"/>
</dbReference>
<dbReference type="Bgee" id="ENSMUSG00000022103">
    <property type="expression patterns" value="Expressed in left lung lobe and 215 other cell types or tissues"/>
</dbReference>
<dbReference type="ExpressionAtlas" id="O08842">
    <property type="expression patterns" value="baseline and differential"/>
</dbReference>
<dbReference type="GO" id="GO:0005886">
    <property type="term" value="C:plasma membrane"/>
    <property type="evidence" value="ECO:0007669"/>
    <property type="project" value="UniProtKB-SubCell"/>
</dbReference>
<dbReference type="GO" id="GO:0098552">
    <property type="term" value="C:side of membrane"/>
    <property type="evidence" value="ECO:0007669"/>
    <property type="project" value="UniProtKB-KW"/>
</dbReference>
<dbReference type="GO" id="GO:0016167">
    <property type="term" value="F:glial cell-derived neurotrophic factor receptor activity"/>
    <property type="evidence" value="ECO:0000250"/>
    <property type="project" value="UniProtKB"/>
</dbReference>
<dbReference type="GO" id="GO:1904399">
    <property type="term" value="F:heparan sulfate binding"/>
    <property type="evidence" value="ECO:0000250"/>
    <property type="project" value="UniProtKB"/>
</dbReference>
<dbReference type="GO" id="GO:0007169">
    <property type="term" value="P:cell surface receptor protein tyrosine kinase signaling pathway"/>
    <property type="evidence" value="ECO:0000316"/>
    <property type="project" value="MGI"/>
</dbReference>
<dbReference type="GO" id="GO:0035860">
    <property type="term" value="P:glial cell-derived neurotrophic factor receptor signaling pathway"/>
    <property type="evidence" value="ECO:0000250"/>
    <property type="project" value="UniProtKB"/>
</dbReference>
<dbReference type="GO" id="GO:0007399">
    <property type="term" value="P:nervous system development"/>
    <property type="evidence" value="ECO:0000315"/>
    <property type="project" value="MGI"/>
</dbReference>
<dbReference type="GO" id="GO:1904894">
    <property type="term" value="P:positive regulation of receptor signaling pathway via STAT"/>
    <property type="evidence" value="ECO:0000314"/>
    <property type="project" value="MGI"/>
</dbReference>
<dbReference type="FunFam" id="1.10.220.110:FF:000001">
    <property type="entry name" value="GDNF family receptor alpha"/>
    <property type="match status" value="1"/>
</dbReference>
<dbReference type="Gene3D" id="1.10.220.110">
    <property type="entry name" value="GDNF binding domain"/>
    <property type="match status" value="1"/>
</dbReference>
<dbReference type="InterPro" id="IPR016017">
    <property type="entry name" value="GDNF/GAS1"/>
</dbReference>
<dbReference type="InterPro" id="IPR037193">
    <property type="entry name" value="GDNF_alpha"/>
</dbReference>
<dbReference type="InterPro" id="IPR003438">
    <property type="entry name" value="GDNF_rcpt"/>
</dbReference>
<dbReference type="InterPro" id="IPR003504">
    <property type="entry name" value="GDNF_rcpt_a2"/>
</dbReference>
<dbReference type="InterPro" id="IPR017372">
    <property type="entry name" value="Glial_neurotroph_fac_rcpt_a1/2"/>
</dbReference>
<dbReference type="PANTHER" id="PTHR10269:SF4">
    <property type="entry name" value="GDNF FAMILY RECEPTOR ALPHA-2"/>
    <property type="match status" value="1"/>
</dbReference>
<dbReference type="PANTHER" id="PTHR10269">
    <property type="entry name" value="GDNF RECEPTOR ALPHA"/>
    <property type="match status" value="1"/>
</dbReference>
<dbReference type="Pfam" id="PF02351">
    <property type="entry name" value="GDNF"/>
    <property type="match status" value="3"/>
</dbReference>
<dbReference type="PIRSF" id="PIRSF038071">
    <property type="entry name" value="GDNF_family_receptor_alpha"/>
    <property type="match status" value="1"/>
</dbReference>
<dbReference type="PRINTS" id="PR01318">
    <property type="entry name" value="GDNFRALPHA2"/>
</dbReference>
<dbReference type="PRINTS" id="PR01316">
    <property type="entry name" value="GDNFRECEPTOR"/>
</dbReference>
<dbReference type="SMART" id="SM00907">
    <property type="entry name" value="GDNF"/>
    <property type="match status" value="3"/>
</dbReference>
<dbReference type="SUPFAM" id="SSF110035">
    <property type="entry name" value="GDNF receptor-like"/>
    <property type="match status" value="1"/>
</dbReference>
<reference key="1">
    <citation type="journal article" date="1997" name="Neuron">
        <title>TrnR2, a novel receptor that mediates neurturin and GDNF signaling through Ret.</title>
        <authorList>
            <person name="Baloh R.H."/>
            <person name="Tansey M.G."/>
            <person name="Golden J.P."/>
            <person name="Creedon D.J."/>
            <person name="Heuckeroth R.O."/>
            <person name="Keck C.L."/>
            <person name="Zimonjic D.B."/>
            <person name="Popescu N.C."/>
            <person name="Johnson E.M. Jr."/>
            <person name="Milbrandt J."/>
        </authorList>
    </citation>
    <scope>NUCLEOTIDE SEQUENCE [MRNA] (ISOFORMS 1 AND 2)</scope>
    <scope>FUNCTION</scope>
    <scope>SUBCELLULAR LOCATION</scope>
    <scope>TISSUE SPECIFICITY</scope>
    <scope>DEVELOPMENTAL STAGE</scope>
</reference>
<reference key="2">
    <citation type="journal article" date="1998" name="NeuroReport">
        <title>Identification of mammalian GFRalpha-2 splice isoforms.</title>
        <authorList>
            <person name="Wong Y.W."/>
            <person name="Too H.P."/>
        </authorList>
    </citation>
    <scope>NUCLEOTIDE SEQUENCE [MRNA] (ISOFORMS 2 AND 3)</scope>
    <scope>TISSUE SPECIFICITY</scope>
    <source>
        <tissue evidence="10">Brain</tissue>
    </source>
</reference>
<reference key="3">
    <citation type="journal article" date="2003" name="Brain Res. Mol. Brain Res.">
        <title>Real time PCR quantification of GFRalpha-2 alternatively spliced isoforms in murine brain and peripheral tissues.</title>
        <authorList>
            <person name="Too H.P."/>
        </authorList>
    </citation>
    <scope>NUCLEOTIDE SEQUENCE [GENOMIC DNA]</scope>
    <scope>ALTERNATIVE SPLICING</scope>
    <scope>TISSUE SPECIFICITY</scope>
    <scope>DEVELOPMENTAL STAGE</scope>
    <source>
        <strain evidence="15">C57BL/6J</strain>
    </source>
</reference>
<reference key="4">
    <citation type="journal article" date="2005" name="Science">
        <title>The transcriptional landscape of the mammalian genome.</title>
        <authorList>
            <person name="Carninci P."/>
            <person name="Kasukawa T."/>
            <person name="Katayama S."/>
            <person name="Gough J."/>
            <person name="Frith M.C."/>
            <person name="Maeda N."/>
            <person name="Oyama R."/>
            <person name="Ravasi T."/>
            <person name="Lenhard B."/>
            <person name="Wells C."/>
            <person name="Kodzius R."/>
            <person name="Shimokawa K."/>
            <person name="Bajic V.B."/>
            <person name="Brenner S.E."/>
            <person name="Batalov S."/>
            <person name="Forrest A.R."/>
            <person name="Zavolan M."/>
            <person name="Davis M.J."/>
            <person name="Wilming L.G."/>
            <person name="Aidinis V."/>
            <person name="Allen J.E."/>
            <person name="Ambesi-Impiombato A."/>
            <person name="Apweiler R."/>
            <person name="Aturaliya R.N."/>
            <person name="Bailey T.L."/>
            <person name="Bansal M."/>
            <person name="Baxter L."/>
            <person name="Beisel K.W."/>
            <person name="Bersano T."/>
            <person name="Bono H."/>
            <person name="Chalk A.M."/>
            <person name="Chiu K.P."/>
            <person name="Choudhary V."/>
            <person name="Christoffels A."/>
            <person name="Clutterbuck D.R."/>
            <person name="Crowe M.L."/>
            <person name="Dalla E."/>
            <person name="Dalrymple B.P."/>
            <person name="de Bono B."/>
            <person name="Della Gatta G."/>
            <person name="di Bernardo D."/>
            <person name="Down T."/>
            <person name="Engstrom P."/>
            <person name="Fagiolini M."/>
            <person name="Faulkner G."/>
            <person name="Fletcher C.F."/>
            <person name="Fukushima T."/>
            <person name="Furuno M."/>
            <person name="Futaki S."/>
            <person name="Gariboldi M."/>
            <person name="Georgii-Hemming P."/>
            <person name="Gingeras T.R."/>
            <person name="Gojobori T."/>
            <person name="Green R.E."/>
            <person name="Gustincich S."/>
            <person name="Harbers M."/>
            <person name="Hayashi Y."/>
            <person name="Hensch T.K."/>
            <person name="Hirokawa N."/>
            <person name="Hill D."/>
            <person name="Huminiecki L."/>
            <person name="Iacono M."/>
            <person name="Ikeo K."/>
            <person name="Iwama A."/>
            <person name="Ishikawa T."/>
            <person name="Jakt M."/>
            <person name="Kanapin A."/>
            <person name="Katoh M."/>
            <person name="Kawasawa Y."/>
            <person name="Kelso J."/>
            <person name="Kitamura H."/>
            <person name="Kitano H."/>
            <person name="Kollias G."/>
            <person name="Krishnan S.P."/>
            <person name="Kruger A."/>
            <person name="Kummerfeld S.K."/>
            <person name="Kurochkin I.V."/>
            <person name="Lareau L.F."/>
            <person name="Lazarevic D."/>
            <person name="Lipovich L."/>
            <person name="Liu J."/>
            <person name="Liuni S."/>
            <person name="McWilliam S."/>
            <person name="Madan Babu M."/>
            <person name="Madera M."/>
            <person name="Marchionni L."/>
            <person name="Matsuda H."/>
            <person name="Matsuzawa S."/>
            <person name="Miki H."/>
            <person name="Mignone F."/>
            <person name="Miyake S."/>
            <person name="Morris K."/>
            <person name="Mottagui-Tabar S."/>
            <person name="Mulder N."/>
            <person name="Nakano N."/>
            <person name="Nakauchi H."/>
            <person name="Ng P."/>
            <person name="Nilsson R."/>
            <person name="Nishiguchi S."/>
            <person name="Nishikawa S."/>
            <person name="Nori F."/>
            <person name="Ohara O."/>
            <person name="Okazaki Y."/>
            <person name="Orlando V."/>
            <person name="Pang K.C."/>
            <person name="Pavan W.J."/>
            <person name="Pavesi G."/>
            <person name="Pesole G."/>
            <person name="Petrovsky N."/>
            <person name="Piazza S."/>
            <person name="Reed J."/>
            <person name="Reid J.F."/>
            <person name="Ring B.Z."/>
            <person name="Ringwald M."/>
            <person name="Rost B."/>
            <person name="Ruan Y."/>
            <person name="Salzberg S.L."/>
            <person name="Sandelin A."/>
            <person name="Schneider C."/>
            <person name="Schoenbach C."/>
            <person name="Sekiguchi K."/>
            <person name="Semple C.A."/>
            <person name="Seno S."/>
            <person name="Sessa L."/>
            <person name="Sheng Y."/>
            <person name="Shibata Y."/>
            <person name="Shimada H."/>
            <person name="Shimada K."/>
            <person name="Silva D."/>
            <person name="Sinclair B."/>
            <person name="Sperling S."/>
            <person name="Stupka E."/>
            <person name="Sugiura K."/>
            <person name="Sultana R."/>
            <person name="Takenaka Y."/>
            <person name="Taki K."/>
            <person name="Tammoja K."/>
            <person name="Tan S.L."/>
            <person name="Tang S."/>
            <person name="Taylor M.S."/>
            <person name="Tegner J."/>
            <person name="Teichmann S.A."/>
            <person name="Ueda H.R."/>
            <person name="van Nimwegen E."/>
            <person name="Verardo R."/>
            <person name="Wei C.L."/>
            <person name="Yagi K."/>
            <person name="Yamanishi H."/>
            <person name="Zabarovsky E."/>
            <person name="Zhu S."/>
            <person name="Zimmer A."/>
            <person name="Hide W."/>
            <person name="Bult C."/>
            <person name="Grimmond S.M."/>
            <person name="Teasdale R.D."/>
            <person name="Liu E.T."/>
            <person name="Brusic V."/>
            <person name="Quackenbush J."/>
            <person name="Wahlestedt C."/>
            <person name="Mattick J.S."/>
            <person name="Hume D.A."/>
            <person name="Kai C."/>
            <person name="Sasaki D."/>
            <person name="Tomaru Y."/>
            <person name="Fukuda S."/>
            <person name="Kanamori-Katayama M."/>
            <person name="Suzuki M."/>
            <person name="Aoki J."/>
            <person name="Arakawa T."/>
            <person name="Iida J."/>
            <person name="Imamura K."/>
            <person name="Itoh M."/>
            <person name="Kato T."/>
            <person name="Kawaji H."/>
            <person name="Kawagashira N."/>
            <person name="Kawashima T."/>
            <person name="Kojima M."/>
            <person name="Kondo S."/>
            <person name="Konno H."/>
            <person name="Nakano K."/>
            <person name="Ninomiya N."/>
            <person name="Nishio T."/>
            <person name="Okada M."/>
            <person name="Plessy C."/>
            <person name="Shibata K."/>
            <person name="Shiraki T."/>
            <person name="Suzuki S."/>
            <person name="Tagami M."/>
            <person name="Waki K."/>
            <person name="Watahiki A."/>
            <person name="Okamura-Oho Y."/>
            <person name="Suzuki H."/>
            <person name="Kawai J."/>
            <person name="Hayashizaki Y."/>
        </authorList>
    </citation>
    <scope>NUCLEOTIDE SEQUENCE [LARGE SCALE MRNA] (ISOFORM 1)</scope>
    <source>
        <strain>C57BL/6J</strain>
        <tissue>Spinal cord</tissue>
    </source>
</reference>
<reference key="5">
    <citation type="journal article" date="2009" name="PLoS Biol.">
        <title>Lineage-specific biology revealed by a finished genome assembly of the mouse.</title>
        <authorList>
            <person name="Church D.M."/>
            <person name="Goodstadt L."/>
            <person name="Hillier L.W."/>
            <person name="Zody M.C."/>
            <person name="Goldstein S."/>
            <person name="She X."/>
            <person name="Bult C.J."/>
            <person name="Agarwala R."/>
            <person name="Cherry J.L."/>
            <person name="DiCuccio M."/>
            <person name="Hlavina W."/>
            <person name="Kapustin Y."/>
            <person name="Meric P."/>
            <person name="Maglott D."/>
            <person name="Birtle Z."/>
            <person name="Marques A.C."/>
            <person name="Graves T."/>
            <person name="Zhou S."/>
            <person name="Teague B."/>
            <person name="Potamousis K."/>
            <person name="Churas C."/>
            <person name="Place M."/>
            <person name="Herschleb J."/>
            <person name="Runnheim R."/>
            <person name="Forrest D."/>
            <person name="Amos-Landgraf J."/>
            <person name="Schwartz D.C."/>
            <person name="Cheng Z."/>
            <person name="Lindblad-Toh K."/>
            <person name="Eichler E.E."/>
            <person name="Ponting C.P."/>
        </authorList>
    </citation>
    <scope>NUCLEOTIDE SEQUENCE [LARGE SCALE GENOMIC DNA]</scope>
    <source>
        <strain>C57BL/6J</strain>
    </source>
</reference>
<reference key="6">
    <citation type="submission" date="2005-07" db="EMBL/GenBank/DDBJ databases">
        <authorList>
            <person name="Mural R.J."/>
            <person name="Adams M.D."/>
            <person name="Myers E.W."/>
            <person name="Smith H.O."/>
            <person name="Venter J.C."/>
        </authorList>
    </citation>
    <scope>NUCLEOTIDE SEQUENCE [LARGE SCALE GENOMIC DNA]</scope>
</reference>
<reference key="7">
    <citation type="journal article" date="2004" name="Genome Res.">
        <title>The status, quality, and expansion of the NIH full-length cDNA project: the Mammalian Gene Collection (MGC).</title>
        <authorList>
            <consortium name="The MGC Project Team"/>
        </authorList>
    </citation>
    <scope>NUCLEOTIDE SEQUENCE [LARGE SCALE MRNA] (ISOFORM 1)</scope>
    <source>
        <tissue>Brain</tissue>
    </source>
</reference>
<reference key="8">
    <citation type="journal article" date="2010" name="Cell">
        <title>A tissue-specific atlas of mouse protein phosphorylation and expression.</title>
        <authorList>
            <person name="Huttlin E.L."/>
            <person name="Jedrychowski M.P."/>
            <person name="Elias J.E."/>
            <person name="Goswami T."/>
            <person name="Rad R."/>
            <person name="Beausoleil S.A."/>
            <person name="Villen J."/>
            <person name="Haas W."/>
            <person name="Sowa M.E."/>
            <person name="Gygi S.P."/>
        </authorList>
    </citation>
    <scope>IDENTIFICATION BY MASS SPECTROMETRY [LARGE SCALE ANALYSIS]</scope>
    <source>
        <tissue>Spleen</tissue>
    </source>
</reference>
<reference key="9">
    <citation type="journal article" date="2013" name="Biochim. Biophys. Acta">
        <title>GDNF family ligand dependent STAT3 activation is mediated by specific alternatively spliced isoforms of GFRalpha2 and RET.</title>
        <authorList>
            <person name="Zhou L."/>
            <person name="Too H.P."/>
        </authorList>
    </citation>
    <scope>FUNCTION (ISOFORM 2)</scope>
</reference>
<accession>O08842</accession>
<accession>Q3UUD8</accession>
<accession>Q920Y3</accession>
<accession>Q9Z2A2</accession>
<accession>Q9Z2A3</accession>
<evidence type="ECO:0000250" key="1">
    <source>
        <dbReference type="UniProtKB" id="O00451"/>
    </source>
</evidence>
<evidence type="ECO:0000255" key="2"/>
<evidence type="ECO:0000256" key="3">
    <source>
        <dbReference type="SAM" id="MobiDB-lite"/>
    </source>
</evidence>
<evidence type="ECO:0000269" key="4">
    <source>
    </source>
</evidence>
<evidence type="ECO:0000269" key="5">
    <source>
    </source>
</evidence>
<evidence type="ECO:0000269" key="6">
    <source>
    </source>
</evidence>
<evidence type="ECO:0000269" key="7">
    <source>
    </source>
</evidence>
<evidence type="ECO:0000303" key="8">
    <source>
    </source>
</evidence>
<evidence type="ECO:0000303" key="9">
    <source>
    </source>
</evidence>
<evidence type="ECO:0000303" key="10">
    <source>
    </source>
</evidence>
<evidence type="ECO:0000305" key="11"/>
<evidence type="ECO:0000305" key="12">
    <source>
    </source>
</evidence>
<evidence type="ECO:0000305" key="13">
    <source>
    </source>
</evidence>
<evidence type="ECO:0000312" key="14">
    <source>
        <dbReference type="EMBL" id="AAC82464.1"/>
    </source>
</evidence>
<evidence type="ECO:0000312" key="15">
    <source>
        <dbReference type="EMBL" id="AAK97483.1"/>
    </source>
</evidence>
<evidence type="ECO:0000312" key="16">
    <source>
        <dbReference type="MGI" id="MGI:1195462"/>
    </source>
</evidence>
<comment type="function">
    <text evidence="1 6">Receptor for neurturin (NRTN), a growth factor that supports the survival of sympathetic neurons (PubMed:9182803). NRTN-binding leads to autophosphorylation and activation of the RET receptor (PubMed:9182803). Also able to mediate GDNF signaling through the RET tyrosine kinase receptor (By similarity).</text>
</comment>
<comment type="function">
    <molecule>Isoform 2</molecule>
    <text evidence="5">Participates in NRTN-induced 'Ser-727' phosphorylation of STAT3.</text>
</comment>
<comment type="subunit">
    <text evidence="1 6">Interacts with NRTN ligand and RET: forms a 2:2:2 ternary complex composed of NRTN ligand, GFRA2 and RET receptor (PubMed:9182803). Also forms a 4:4:4 tetrameric complex composed of 4 copies of NRTN ligand, GFRA2 and RET receptor, which prevents endocytosis of RET (By similarity). Interacts with SORL1 (By similarity).</text>
</comment>
<comment type="subcellular location">
    <subcellularLocation>
        <location evidence="13">Cell membrane</location>
        <topology evidence="13">Lipid-anchor</topology>
        <topology evidence="13">GPI-anchor</topology>
    </subcellularLocation>
</comment>
<comment type="alternative products">
    <event type="alternative splicing"/>
    <isoform>
        <id>O08842-1</id>
        <name>1</name>
        <name>Long</name>
        <name evidence="8 10">2a</name>
        <sequence type="displayed"/>
    </isoform>
    <isoform>
        <id>O08842-2</id>
        <name>2</name>
        <name>Short</name>
        <name evidence="8 10">2c</name>
        <sequence type="described" ref="VSP_001662"/>
    </isoform>
    <isoform>
        <id>O08842-3</id>
        <name>3</name>
        <name evidence="8 10">2b</name>
        <sequence type="described" ref="VSP_057520"/>
    </isoform>
    <text evidence="12">Additional isoforms seem to exist.</text>
</comment>
<comment type="tissue specificity">
    <text evidence="4 6 7">Neurons of the superior cervical and dorsal root ganglia, and adult brain and testis. Low level in the substantia nigra, spleen and adrenal gland (PubMed:9182803). Isoform 1, isoform 2 and isoform 3 are all expressed in brain, liver, ileum, spleen, heart and kidney (PubMed:9875703). In brain, isoform 1 is most abundant, isoform 2 slightly less and isoform 3 is lowest. No significant levels of isoform 1, isoform 2 or isoform 3 expression in testis (PubMed:12829325).</text>
</comment>
<comment type="developmental stage">
    <text evidence="4 6">Expressed at low level in the ventral mesencephalon at 14 dpc. Highly expressed in the developing dorsal root ganglia (PubMed:9182803). Isoform 1, isoform 2 and isoform 3 are all highly expressed in the late embryonic development (15 dpc and 17 dpc) (PubMed:12829325).</text>
</comment>
<comment type="similarity">
    <text evidence="11">Belongs to the GDNFR family.</text>
</comment>
<comment type="sequence caution" evidence="11">
    <conflict type="erroneous termination">
        <sequence resource="EMBL-CDS" id="AAC53548"/>
    </conflict>
    <text>Truncated C-terminus.</text>
</comment>
<comment type="sequence caution" evidence="11">
    <conflict type="erroneous termination">
        <sequence resource="EMBL-CDS" id="AAC82464"/>
    </conflict>
    <text>Truncated C-terminus.</text>
</comment>
<comment type="sequence caution" evidence="11">
    <conflict type="erroneous termination">
        <sequence resource="EMBL-CDS" id="AAC82465"/>
    </conflict>
    <text>Truncated C-terminus.</text>
</comment>
<comment type="sequence caution" evidence="11">
    <conflict type="erroneous termination">
        <sequence resource="EMBL-CDS" id="AAK97483"/>
    </conflict>
    <text>Truncated C-terminus.</text>
</comment>